<reference key="1">
    <citation type="journal article" date="2007" name="Plant Cell">
        <title>Dothideomycete-plant interactions illuminated by genome sequencing and EST analysis of the wheat pathogen Stagonospora nodorum.</title>
        <authorList>
            <person name="Hane J.K."/>
            <person name="Lowe R.G.T."/>
            <person name="Solomon P.S."/>
            <person name="Tan K.-C."/>
            <person name="Schoch C.L."/>
            <person name="Spatafora J.W."/>
            <person name="Crous P.W."/>
            <person name="Kodira C.D."/>
            <person name="Birren B.W."/>
            <person name="Galagan J.E."/>
            <person name="Torriani S.F.F."/>
            <person name="McDonald B.A."/>
            <person name="Oliver R.P."/>
        </authorList>
    </citation>
    <scope>NUCLEOTIDE SEQUENCE [LARGE SCALE GENOMIC DNA]</scope>
    <source>
        <strain>SN15 / ATCC MYA-4574 / FGSC 10173</strain>
    </source>
</reference>
<comment type="function">
    <text evidence="1">Essential component of the cytosolic iron-sulfur (Fe/S) protein assembly machinery. Required for the maturation of extramitochondrial Fe/S proteins.</text>
</comment>
<comment type="similarity">
    <text evidence="1">Belongs to the WD repeat CIA1 family.</text>
</comment>
<accession>Q0USG2</accession>
<dbReference type="EMBL" id="CH445331">
    <property type="protein sequence ID" value="EAT87693.1"/>
    <property type="molecule type" value="Genomic_DNA"/>
</dbReference>
<dbReference type="RefSeq" id="XP_001795709.1">
    <property type="nucleotide sequence ID" value="XM_001795657.1"/>
</dbReference>
<dbReference type="SMR" id="Q0USG2"/>
<dbReference type="FunCoup" id="Q0USG2">
    <property type="interactions" value="57"/>
</dbReference>
<dbReference type="STRING" id="321614.Q0USG2"/>
<dbReference type="EnsemblFungi" id="SNOT_05302">
    <property type="protein sequence ID" value="SNOT_05302"/>
    <property type="gene ID" value="SNOG_05302"/>
</dbReference>
<dbReference type="GeneID" id="5972584"/>
<dbReference type="KEGG" id="pno:SNOG_05302"/>
<dbReference type="VEuPathDB" id="FungiDB:JI435_053020"/>
<dbReference type="eggNOG" id="KOG0645">
    <property type="taxonomic scope" value="Eukaryota"/>
</dbReference>
<dbReference type="HOGENOM" id="CLU_000288_57_8_1"/>
<dbReference type="InParanoid" id="Q0USG2"/>
<dbReference type="OMA" id="IREIRWS"/>
<dbReference type="OrthoDB" id="284782at2759"/>
<dbReference type="Proteomes" id="UP000001055">
    <property type="component" value="Unassembled WGS sequence"/>
</dbReference>
<dbReference type="GO" id="GO:0097361">
    <property type="term" value="C:cytosolic [4Fe-4S] assembly targeting complex"/>
    <property type="evidence" value="ECO:0000318"/>
    <property type="project" value="GO_Central"/>
</dbReference>
<dbReference type="GO" id="GO:0016226">
    <property type="term" value="P:iron-sulfur cluster assembly"/>
    <property type="evidence" value="ECO:0000318"/>
    <property type="project" value="GO_Central"/>
</dbReference>
<dbReference type="FunFam" id="2.130.10.10:FF:000816">
    <property type="entry name" value="Probable cytosolic iron-sulfur protein assembly protein 1"/>
    <property type="match status" value="1"/>
</dbReference>
<dbReference type="Gene3D" id="2.130.10.10">
    <property type="entry name" value="YVTN repeat-like/Quinoprotein amine dehydrogenase"/>
    <property type="match status" value="1"/>
</dbReference>
<dbReference type="HAMAP" id="MF_03037">
    <property type="entry name" value="ciao1"/>
    <property type="match status" value="1"/>
</dbReference>
<dbReference type="InterPro" id="IPR028608">
    <property type="entry name" value="CIAO1/Cia1"/>
</dbReference>
<dbReference type="InterPro" id="IPR015943">
    <property type="entry name" value="WD40/YVTN_repeat-like_dom_sf"/>
</dbReference>
<dbReference type="InterPro" id="IPR036322">
    <property type="entry name" value="WD40_repeat_dom_sf"/>
</dbReference>
<dbReference type="InterPro" id="IPR001680">
    <property type="entry name" value="WD40_rpt"/>
</dbReference>
<dbReference type="PANTHER" id="PTHR19920:SF0">
    <property type="entry name" value="CYTOSOLIC IRON-SULFUR PROTEIN ASSEMBLY PROTEIN CIAO1-RELATED"/>
    <property type="match status" value="1"/>
</dbReference>
<dbReference type="PANTHER" id="PTHR19920">
    <property type="entry name" value="WD40 PROTEIN CIAO1"/>
    <property type="match status" value="1"/>
</dbReference>
<dbReference type="Pfam" id="PF00400">
    <property type="entry name" value="WD40"/>
    <property type="match status" value="5"/>
</dbReference>
<dbReference type="SMART" id="SM00320">
    <property type="entry name" value="WD40"/>
    <property type="match status" value="7"/>
</dbReference>
<dbReference type="SUPFAM" id="SSF50978">
    <property type="entry name" value="WD40 repeat-like"/>
    <property type="match status" value="1"/>
</dbReference>
<dbReference type="PROSITE" id="PS50082">
    <property type="entry name" value="WD_REPEATS_2"/>
    <property type="match status" value="4"/>
</dbReference>
<dbReference type="PROSITE" id="PS50294">
    <property type="entry name" value="WD_REPEATS_REGION"/>
    <property type="match status" value="1"/>
</dbReference>
<keyword id="KW-0677">Repeat</keyword>
<keyword id="KW-0853">WD repeat</keyword>
<gene>
    <name evidence="1" type="primary">CIA1</name>
    <name type="ORF">SNOG_05302</name>
</gene>
<evidence type="ECO:0000255" key="1">
    <source>
        <dbReference type="HAMAP-Rule" id="MF_03037"/>
    </source>
</evidence>
<evidence type="ECO:0000256" key="2">
    <source>
        <dbReference type="SAM" id="MobiDB-lite"/>
    </source>
</evidence>
<proteinExistence type="inferred from homology"/>
<sequence>MSDPRPNTLSPLATLTPPSSSRTWQTAPHPTLPIVATACSDRSVRVYSLTSFTLLHSITGGHKRSVRAVSWKPHTQGQSVLATGSFDSSAGIWRREEQGGNEDDFTNRRVGGAEDEDGRDDDDEDEYQFSCILDGHESEIKSLSWSPTGQYLATCSRDKSVWIWEELEDDNFETVAVLQEHDGDVKCVAWHPEEDLLASASYDDSVRLYREDSDDWVQVACIAGKEGHGMTVWWVEFEGSGISGKDFRVQRDGLSEEQTQHVDSMERSGPRLATCSDDRTVRIWRRKPRERAENASSNTGIPSIIRSAAIDEDWYQDAILPQVHERAIYSVSWSRTTGLIASAGSDGKIIIYKERWRKQTPNGVDTDNMQIDGSEPASLTEWFVLAELFSAHSVFEINHVTWAKRADKDKRYDGEEVIVSTGDEGEVKVWTLDEVADPPQRDA</sequence>
<feature type="chain" id="PRO_0000382523" description="Probable cytosolic iron-sulfur protein assembly protein 1">
    <location>
        <begin position="1"/>
        <end position="443"/>
    </location>
</feature>
<feature type="repeat" description="WD 1">
    <location>
        <begin position="14"/>
        <end position="57"/>
    </location>
</feature>
<feature type="repeat" description="WD 2">
    <location>
        <begin position="61"/>
        <end position="103"/>
    </location>
</feature>
<feature type="repeat" description="WD 3">
    <location>
        <begin position="135"/>
        <end position="174"/>
    </location>
</feature>
<feature type="repeat" description="WD 4">
    <location>
        <begin position="180"/>
        <end position="219"/>
    </location>
</feature>
<feature type="repeat" description="WD 5">
    <location>
        <begin position="221"/>
        <end position="248"/>
    </location>
</feature>
<feature type="repeat" description="WD 6">
    <location>
        <begin position="255"/>
        <end position="294"/>
    </location>
</feature>
<feature type="repeat" description="WD 7">
    <location>
        <begin position="323"/>
        <end position="362"/>
    </location>
</feature>
<feature type="repeat" description="WD 8">
    <location>
        <begin position="391"/>
        <end position="440"/>
    </location>
</feature>
<feature type="region of interest" description="Disordered" evidence="2">
    <location>
        <begin position="1"/>
        <end position="27"/>
    </location>
</feature>
<feature type="region of interest" description="Disordered" evidence="2">
    <location>
        <begin position="95"/>
        <end position="124"/>
    </location>
</feature>
<feature type="compositionally biased region" description="Low complexity" evidence="2">
    <location>
        <begin position="8"/>
        <end position="21"/>
    </location>
</feature>
<feature type="compositionally biased region" description="Acidic residues" evidence="2">
    <location>
        <begin position="113"/>
        <end position="124"/>
    </location>
</feature>
<name>CIAO1_PHANO</name>
<protein>
    <recommendedName>
        <fullName evidence="1">Probable cytosolic iron-sulfur protein assembly protein 1</fullName>
    </recommendedName>
</protein>
<organism>
    <name type="scientific">Phaeosphaeria nodorum (strain SN15 / ATCC MYA-4574 / FGSC 10173)</name>
    <name type="common">Glume blotch fungus</name>
    <name type="synonym">Parastagonospora nodorum</name>
    <dbReference type="NCBI Taxonomy" id="321614"/>
    <lineage>
        <taxon>Eukaryota</taxon>
        <taxon>Fungi</taxon>
        <taxon>Dikarya</taxon>
        <taxon>Ascomycota</taxon>
        <taxon>Pezizomycotina</taxon>
        <taxon>Dothideomycetes</taxon>
        <taxon>Pleosporomycetidae</taxon>
        <taxon>Pleosporales</taxon>
        <taxon>Pleosporineae</taxon>
        <taxon>Phaeosphaeriaceae</taxon>
        <taxon>Parastagonospora</taxon>
    </lineage>
</organism>